<evidence type="ECO:0000255" key="1">
    <source>
        <dbReference type="PROSITE-ProRule" id="PRU00273"/>
    </source>
</evidence>
<proteinExistence type="predicted"/>
<protein>
    <recommendedName>
        <fullName>Uncharacterized protein MJ0314</fullName>
    </recommendedName>
</protein>
<gene>
    <name type="ordered locus">MJ0314</name>
</gene>
<name>Y314_METJA</name>
<reference key="1">
    <citation type="journal article" date="1996" name="Science">
        <title>Complete genome sequence of the methanogenic archaeon, Methanococcus jannaschii.</title>
        <authorList>
            <person name="Bult C.J."/>
            <person name="White O."/>
            <person name="Olsen G.J."/>
            <person name="Zhou L."/>
            <person name="Fleischmann R.D."/>
            <person name="Sutton G.G."/>
            <person name="Blake J.A."/>
            <person name="FitzGerald L.M."/>
            <person name="Clayton R.A."/>
            <person name="Gocayne J.D."/>
            <person name="Kerlavage A.R."/>
            <person name="Dougherty B.A."/>
            <person name="Tomb J.-F."/>
            <person name="Adams M.D."/>
            <person name="Reich C.I."/>
            <person name="Overbeek R."/>
            <person name="Kirkness E.F."/>
            <person name="Weinstock K.G."/>
            <person name="Merrick J.M."/>
            <person name="Glodek A."/>
            <person name="Scott J.L."/>
            <person name="Geoghagen N.S.M."/>
            <person name="Weidman J.F."/>
            <person name="Fuhrmann J.L."/>
            <person name="Nguyen D."/>
            <person name="Utterback T.R."/>
            <person name="Kelley J.M."/>
            <person name="Peterson J.D."/>
            <person name="Sadow P.W."/>
            <person name="Hanna M.C."/>
            <person name="Cotton M.D."/>
            <person name="Roberts K.M."/>
            <person name="Hurst M.A."/>
            <person name="Kaine B.P."/>
            <person name="Borodovsky M."/>
            <person name="Klenk H.-P."/>
            <person name="Fraser C.M."/>
            <person name="Smith H.O."/>
            <person name="Woese C.R."/>
            <person name="Venter J.C."/>
        </authorList>
    </citation>
    <scope>NUCLEOTIDE SEQUENCE [LARGE SCALE GENOMIC DNA]</scope>
    <source>
        <strain>ATCC 43067 / DSM 2661 / JAL-1 / JCM 10045 / NBRC 100440</strain>
    </source>
</reference>
<dbReference type="EMBL" id="L77117">
    <property type="protein sequence ID" value="AAB98310.1"/>
    <property type="molecule type" value="Genomic_DNA"/>
</dbReference>
<dbReference type="PIR" id="C64339">
    <property type="entry name" value="C64339"/>
</dbReference>
<dbReference type="RefSeq" id="WP_010869812.1">
    <property type="nucleotide sequence ID" value="NC_000909.1"/>
</dbReference>
<dbReference type="SMR" id="Q57762"/>
<dbReference type="PaxDb" id="243232-MJ_0314"/>
<dbReference type="EnsemblBacteria" id="AAB98310">
    <property type="protein sequence ID" value="AAB98310"/>
    <property type="gene ID" value="MJ_0314"/>
</dbReference>
<dbReference type="GeneID" id="1451169"/>
<dbReference type="KEGG" id="mja:MJ_0314"/>
<dbReference type="eggNOG" id="arCOG03156">
    <property type="taxonomic scope" value="Archaea"/>
</dbReference>
<dbReference type="HOGENOM" id="CLU_1056064_0_0_2"/>
<dbReference type="InParanoid" id="Q57762"/>
<dbReference type="OrthoDB" id="65293at2157"/>
<dbReference type="PhylomeDB" id="Q57762"/>
<dbReference type="Proteomes" id="UP000000805">
    <property type="component" value="Chromosome"/>
</dbReference>
<dbReference type="GO" id="GO:0003677">
    <property type="term" value="F:DNA binding"/>
    <property type="evidence" value="ECO:0007669"/>
    <property type="project" value="InterPro"/>
</dbReference>
<dbReference type="GO" id="GO:0000150">
    <property type="term" value="F:DNA strand exchange activity"/>
    <property type="evidence" value="ECO:0007669"/>
    <property type="project" value="InterPro"/>
</dbReference>
<dbReference type="GO" id="GO:0004519">
    <property type="term" value="F:endonuclease activity"/>
    <property type="evidence" value="ECO:0007669"/>
    <property type="project" value="InterPro"/>
</dbReference>
<dbReference type="Gene3D" id="1.10.10.60">
    <property type="entry name" value="Homeodomain-like"/>
    <property type="match status" value="2"/>
</dbReference>
<dbReference type="Gene3D" id="3.10.28.10">
    <property type="entry name" value="Homing endonucleases"/>
    <property type="match status" value="1"/>
</dbReference>
<dbReference type="InterPro" id="IPR009057">
    <property type="entry name" value="Homeodomain-like_sf"/>
</dbReference>
<dbReference type="InterPro" id="IPR027434">
    <property type="entry name" value="Homing_endonucl"/>
</dbReference>
<dbReference type="InterPro" id="IPR004042">
    <property type="entry name" value="Intein_endonuc_central"/>
</dbReference>
<dbReference type="InterPro" id="IPR004860">
    <property type="entry name" value="LAGLIDADG_dom"/>
</dbReference>
<dbReference type="InterPro" id="IPR006120">
    <property type="entry name" value="Resolvase_HTH_dom"/>
</dbReference>
<dbReference type="Pfam" id="PF02796">
    <property type="entry name" value="HTH_7"/>
    <property type="match status" value="2"/>
</dbReference>
<dbReference type="Pfam" id="PF14528">
    <property type="entry name" value="LAGLIDADG_3"/>
    <property type="match status" value="2"/>
</dbReference>
<dbReference type="SUPFAM" id="SSF46689">
    <property type="entry name" value="Homeodomain-like"/>
    <property type="match status" value="1"/>
</dbReference>
<dbReference type="SUPFAM" id="SSF55608">
    <property type="entry name" value="Homing endonucleases"/>
    <property type="match status" value="2"/>
</dbReference>
<dbReference type="PROSITE" id="PS50819">
    <property type="entry name" value="INTEIN_ENDONUCLEASE"/>
    <property type="match status" value="1"/>
</dbReference>
<feature type="chain" id="PRO_0000106789" description="Uncharacterized protein MJ0314">
    <location>
        <begin position="1"/>
        <end position="263"/>
    </location>
</feature>
<feature type="domain" description="DOD-type homing endonuclease" evidence="1">
    <location>
        <begin position="107"/>
        <end position="246"/>
    </location>
</feature>
<keyword id="KW-1185">Reference proteome</keyword>
<sequence>MELYKKGYSARTIAKILGCSKSTVCYRLYKLGITPRRGLDLNPQEIIKLYQNGYTTTEIAKIMKCSHETIRRILRNNNIDIRKSSESLIIKNTKKINLNPSESLAYILGVLNGDGSVNKQESNYVIELKVTDKDFIEEFKRNLENIGFKYINEYVRKFENKKDQYVVRVRSKGFYYWYKSLNVDYYMNVIGNNEKLMISWLKGFYDSEGSVVINKKGNYVYKYVSIANTNRNLIDVCCSFLEKLGIEYSVYCEKNNRYKSGYL</sequence>
<organism>
    <name type="scientific">Methanocaldococcus jannaschii (strain ATCC 43067 / DSM 2661 / JAL-1 / JCM 10045 / NBRC 100440)</name>
    <name type="common">Methanococcus jannaschii</name>
    <dbReference type="NCBI Taxonomy" id="243232"/>
    <lineage>
        <taxon>Archaea</taxon>
        <taxon>Methanobacteriati</taxon>
        <taxon>Methanobacteriota</taxon>
        <taxon>Methanomada group</taxon>
        <taxon>Methanococci</taxon>
        <taxon>Methanococcales</taxon>
        <taxon>Methanocaldococcaceae</taxon>
        <taxon>Methanocaldococcus</taxon>
    </lineage>
</organism>
<accession>Q57762</accession>